<comment type="function">
    <text evidence="1">DNA-dependent RNA polymerase catalyzes the transcription of DNA into RNA using the four ribonucleoside triphosphates as substrates.</text>
</comment>
<comment type="catalytic activity">
    <reaction evidence="1">
        <text>RNA(n) + a ribonucleoside 5'-triphosphate = RNA(n+1) + diphosphate</text>
        <dbReference type="Rhea" id="RHEA:21248"/>
        <dbReference type="Rhea" id="RHEA-COMP:14527"/>
        <dbReference type="Rhea" id="RHEA-COMP:17342"/>
        <dbReference type="ChEBI" id="CHEBI:33019"/>
        <dbReference type="ChEBI" id="CHEBI:61557"/>
        <dbReference type="ChEBI" id="CHEBI:140395"/>
        <dbReference type="EC" id="2.7.7.6"/>
    </reaction>
</comment>
<comment type="subunit">
    <text evidence="1">The RNAP catalytic core consists of 2 alpha, 1 beta, 1 beta' and 1 omega subunit. When a sigma factor is associated with the core the holoenzyme is formed, which can initiate transcription.</text>
</comment>
<comment type="similarity">
    <text evidence="1">Belongs to the RNA polymerase beta chain family.</text>
</comment>
<feature type="chain" id="PRO_1000165830" description="DNA-directed RNA polymerase subunit beta">
    <location>
        <begin position="1"/>
        <end position="1238"/>
    </location>
</feature>
<feature type="region of interest" description="Disordered" evidence="2">
    <location>
        <begin position="1187"/>
        <end position="1238"/>
    </location>
</feature>
<feature type="compositionally biased region" description="Acidic residues" evidence="2">
    <location>
        <begin position="1193"/>
        <end position="1238"/>
    </location>
</feature>
<dbReference type="EC" id="2.7.7.6" evidence="1"/>
<dbReference type="EMBL" id="CP000924">
    <property type="protein sequence ID" value="ABY94035.1"/>
    <property type="molecule type" value="Genomic_DNA"/>
</dbReference>
<dbReference type="RefSeq" id="WP_012268991.1">
    <property type="nucleotide sequence ID" value="NC_010321.1"/>
</dbReference>
<dbReference type="SMR" id="B0KCJ2"/>
<dbReference type="STRING" id="340099.Teth39_0366"/>
<dbReference type="KEGG" id="tpd:Teth39_0366"/>
<dbReference type="eggNOG" id="COG0085">
    <property type="taxonomic scope" value="Bacteria"/>
</dbReference>
<dbReference type="HOGENOM" id="CLU_000524_4_3_9"/>
<dbReference type="Proteomes" id="UP000002156">
    <property type="component" value="Chromosome"/>
</dbReference>
<dbReference type="GO" id="GO:0000428">
    <property type="term" value="C:DNA-directed RNA polymerase complex"/>
    <property type="evidence" value="ECO:0007669"/>
    <property type="project" value="UniProtKB-KW"/>
</dbReference>
<dbReference type="GO" id="GO:0003677">
    <property type="term" value="F:DNA binding"/>
    <property type="evidence" value="ECO:0007669"/>
    <property type="project" value="UniProtKB-UniRule"/>
</dbReference>
<dbReference type="GO" id="GO:0003899">
    <property type="term" value="F:DNA-directed RNA polymerase activity"/>
    <property type="evidence" value="ECO:0007669"/>
    <property type="project" value="UniProtKB-UniRule"/>
</dbReference>
<dbReference type="GO" id="GO:0032549">
    <property type="term" value="F:ribonucleoside binding"/>
    <property type="evidence" value="ECO:0007669"/>
    <property type="project" value="InterPro"/>
</dbReference>
<dbReference type="GO" id="GO:0006351">
    <property type="term" value="P:DNA-templated transcription"/>
    <property type="evidence" value="ECO:0007669"/>
    <property type="project" value="UniProtKB-UniRule"/>
</dbReference>
<dbReference type="CDD" id="cd00653">
    <property type="entry name" value="RNA_pol_B_RPB2"/>
    <property type="match status" value="1"/>
</dbReference>
<dbReference type="FunFam" id="3.90.1800.10:FF:000001">
    <property type="entry name" value="DNA-directed RNA polymerase subunit beta"/>
    <property type="match status" value="1"/>
</dbReference>
<dbReference type="Gene3D" id="2.40.50.100">
    <property type="match status" value="1"/>
</dbReference>
<dbReference type="Gene3D" id="2.40.50.150">
    <property type="match status" value="1"/>
</dbReference>
<dbReference type="Gene3D" id="3.90.1100.10">
    <property type="match status" value="2"/>
</dbReference>
<dbReference type="Gene3D" id="2.40.270.10">
    <property type="entry name" value="DNA-directed RNA polymerase, subunit 2, domain 6"/>
    <property type="match status" value="1"/>
</dbReference>
<dbReference type="Gene3D" id="3.90.1800.10">
    <property type="entry name" value="RNA polymerase alpha subunit dimerisation domain"/>
    <property type="match status" value="1"/>
</dbReference>
<dbReference type="Gene3D" id="3.90.1110.10">
    <property type="entry name" value="RNA polymerase Rpb2, domain 2"/>
    <property type="match status" value="1"/>
</dbReference>
<dbReference type="HAMAP" id="MF_01321">
    <property type="entry name" value="RNApol_bact_RpoB"/>
    <property type="match status" value="1"/>
</dbReference>
<dbReference type="InterPro" id="IPR019462">
    <property type="entry name" value="DNA-dir_RNA_pol_bsu_external_1"/>
</dbReference>
<dbReference type="InterPro" id="IPR015712">
    <property type="entry name" value="DNA-dir_RNA_pol_su2"/>
</dbReference>
<dbReference type="InterPro" id="IPR007120">
    <property type="entry name" value="DNA-dir_RNAP_su2_dom"/>
</dbReference>
<dbReference type="InterPro" id="IPR037033">
    <property type="entry name" value="DNA-dir_RNAP_su2_hyb_sf"/>
</dbReference>
<dbReference type="InterPro" id="IPR010243">
    <property type="entry name" value="RNA_pol_bsu_bac"/>
</dbReference>
<dbReference type="InterPro" id="IPR007121">
    <property type="entry name" value="RNA_pol_bsu_CS"/>
</dbReference>
<dbReference type="InterPro" id="IPR007644">
    <property type="entry name" value="RNA_pol_bsu_protrusion"/>
</dbReference>
<dbReference type="InterPro" id="IPR007642">
    <property type="entry name" value="RNA_pol_Rpb2_2"/>
</dbReference>
<dbReference type="InterPro" id="IPR037034">
    <property type="entry name" value="RNA_pol_Rpb2_2_sf"/>
</dbReference>
<dbReference type="InterPro" id="IPR007645">
    <property type="entry name" value="RNA_pol_Rpb2_3"/>
</dbReference>
<dbReference type="InterPro" id="IPR007641">
    <property type="entry name" value="RNA_pol_Rpb2_7"/>
</dbReference>
<dbReference type="InterPro" id="IPR014724">
    <property type="entry name" value="RNA_pol_RPB2_OB-fold"/>
</dbReference>
<dbReference type="NCBIfam" id="NF001616">
    <property type="entry name" value="PRK00405.1"/>
    <property type="match status" value="1"/>
</dbReference>
<dbReference type="NCBIfam" id="TIGR02013">
    <property type="entry name" value="rpoB"/>
    <property type="match status" value="1"/>
</dbReference>
<dbReference type="PANTHER" id="PTHR20856">
    <property type="entry name" value="DNA-DIRECTED RNA POLYMERASE I SUBUNIT 2"/>
    <property type="match status" value="1"/>
</dbReference>
<dbReference type="Pfam" id="PF04563">
    <property type="entry name" value="RNA_pol_Rpb2_1"/>
    <property type="match status" value="1"/>
</dbReference>
<dbReference type="Pfam" id="PF04561">
    <property type="entry name" value="RNA_pol_Rpb2_2"/>
    <property type="match status" value="2"/>
</dbReference>
<dbReference type="Pfam" id="PF04565">
    <property type="entry name" value="RNA_pol_Rpb2_3"/>
    <property type="match status" value="1"/>
</dbReference>
<dbReference type="Pfam" id="PF10385">
    <property type="entry name" value="RNA_pol_Rpb2_45"/>
    <property type="match status" value="1"/>
</dbReference>
<dbReference type="Pfam" id="PF00562">
    <property type="entry name" value="RNA_pol_Rpb2_6"/>
    <property type="match status" value="1"/>
</dbReference>
<dbReference type="Pfam" id="PF04560">
    <property type="entry name" value="RNA_pol_Rpb2_7"/>
    <property type="match status" value="1"/>
</dbReference>
<dbReference type="SUPFAM" id="SSF64484">
    <property type="entry name" value="beta and beta-prime subunits of DNA dependent RNA-polymerase"/>
    <property type="match status" value="1"/>
</dbReference>
<dbReference type="PROSITE" id="PS01166">
    <property type="entry name" value="RNA_POL_BETA"/>
    <property type="match status" value="1"/>
</dbReference>
<sequence>MVRPVQVGNKTRMSFAKIDEVLEMPDLIEVQKKSYKWFLEEGLREVFREISPIESFTGNLALEFVDYRLENNPKYSVEECKDRDTTYAVPMKVKVRLTNRETGEIKESEVFMGDFPLMTEKGTFIINGAERVIVSQLVRSPGVYYEQQFDKFGKKLISATVIPNRGAWLEYEEDSNDIVYVRIDRTRKVPITVLLRALGYSTDIQILDLLGEEEKLKATLDKDTTKSEEEALIEIYKRLRPGEPPTVESAKSLLYALFFDAKRYDLAKVGRYKFNKKLALKTRIANLKSAKKIVNPVTGEILVEEGEKISKEKAEEIQNCGINVVEVLVEGKVVKVIGNNTVDINKYPMPYDVSSLNIKEAVNLSVLKEILDNFSDEEAVINEIKNRMDELVPKHITKDDIIATISYQLNLTHGIGSIDDIDHLGNRRLRSVGELLQNQFRIGLARLERVVKERMTIQDVNEITPQNLINIRPVVAAIREFFGSSQLSQFMDQTNPLAELTHKRRVSALGPGGLSRERAGFEVRDVHYSHYGRICPIETPEGPNIGLIGSLTTYARVNEYGFIEAPYRRVDKTTGTVTDEIVYMTADEEDEYIIAQANEPLDENNRFINEKVVCRLKEEIIAVPPTEVDFMDVSPKQIVSVATSMIPFLENDDANRALMGSNMQRQAVPLIKPEAPIIGTGIEYKAAVDSGVVVLAKNDGVVEKVAADKVVIRTKDGRRDEYNLLKFKRSNQGTCINQRPIVNEGDEVKKGQVICDGPSTDYGELALGKNVLVGFMPWEGYNYEDAILISEELVRDDSLTSIHIEEYDAEARDTKLGPEEITREIPNVGEDALKDLDERGIIRIGAEVTAGDILVGKVTPKGETELTAEERLLRAIFGEKAREVRDTSLRVPHGESGIVVDVKVYSRENGDELPPGVNQMVRVFVAQKRKISVGDKMAGRHGNKGVISRILPVEDMPFLPDGTPLQICLNPLGVPSRMNIGQVLEVHLGLVAKALGWQIATPVFDGATEEDIQELLAKSGFSPDGKVQLYDGRTGEPFDNKVTVGYMYMLKLHHLVDDKMHARSTGPYSLVTQQPLGGKAQFGGQRFGEMEVWALEAYGAAHTLQEILTVKSDDVSGRVKTYEAIVKGENIPEPGIPESFKVLVKELQSLALDVKVITEDNQEIPLKEFEDDDDSDVPDATLNINIEGREDTPPEEVYEESYEEGFEEEIEELPEDIDFEPDSFDIENDDLDLEDFDI</sequence>
<reference key="1">
    <citation type="submission" date="2008-01" db="EMBL/GenBank/DDBJ databases">
        <title>Complete sequence of Thermoanaerobacter pseudethanolicus 39E.</title>
        <authorList>
            <person name="Copeland A."/>
            <person name="Lucas S."/>
            <person name="Lapidus A."/>
            <person name="Barry K."/>
            <person name="Glavina del Rio T."/>
            <person name="Dalin E."/>
            <person name="Tice H."/>
            <person name="Pitluck S."/>
            <person name="Bruce D."/>
            <person name="Goodwin L."/>
            <person name="Saunders E."/>
            <person name="Brettin T."/>
            <person name="Detter J.C."/>
            <person name="Han C."/>
            <person name="Schmutz J."/>
            <person name="Larimer F."/>
            <person name="Land M."/>
            <person name="Hauser L."/>
            <person name="Kyrpides N."/>
            <person name="Lykidis A."/>
            <person name="Hemme C."/>
            <person name="Fields M.W."/>
            <person name="He Z."/>
            <person name="Zhou J."/>
            <person name="Richardson P."/>
        </authorList>
    </citation>
    <scope>NUCLEOTIDE SEQUENCE [LARGE SCALE GENOMIC DNA]</scope>
    <source>
        <strain>ATCC 33223 / DSM 2355 / 39E</strain>
    </source>
</reference>
<organism>
    <name type="scientific">Thermoanaerobacter pseudethanolicus (strain ATCC 33223 / 39E)</name>
    <name type="common">Clostridium thermohydrosulfuricum</name>
    <dbReference type="NCBI Taxonomy" id="340099"/>
    <lineage>
        <taxon>Bacteria</taxon>
        <taxon>Bacillati</taxon>
        <taxon>Bacillota</taxon>
        <taxon>Clostridia</taxon>
        <taxon>Thermoanaerobacterales</taxon>
        <taxon>Thermoanaerobacteraceae</taxon>
        <taxon>Thermoanaerobacter</taxon>
    </lineage>
</organism>
<name>RPOB_THEP3</name>
<keyword id="KW-0240">DNA-directed RNA polymerase</keyword>
<keyword id="KW-0548">Nucleotidyltransferase</keyword>
<keyword id="KW-1185">Reference proteome</keyword>
<keyword id="KW-0804">Transcription</keyword>
<keyword id="KW-0808">Transferase</keyword>
<protein>
    <recommendedName>
        <fullName evidence="1">DNA-directed RNA polymerase subunit beta</fullName>
        <shortName evidence="1">RNAP subunit beta</shortName>
        <ecNumber evidence="1">2.7.7.6</ecNumber>
    </recommendedName>
    <alternativeName>
        <fullName evidence="1">RNA polymerase subunit beta</fullName>
    </alternativeName>
    <alternativeName>
        <fullName evidence="1">Transcriptase subunit beta</fullName>
    </alternativeName>
</protein>
<gene>
    <name evidence="1" type="primary">rpoB</name>
    <name type="ordered locus">Teth39_0366</name>
</gene>
<accession>B0KCJ2</accession>
<evidence type="ECO:0000255" key="1">
    <source>
        <dbReference type="HAMAP-Rule" id="MF_01321"/>
    </source>
</evidence>
<evidence type="ECO:0000256" key="2">
    <source>
        <dbReference type="SAM" id="MobiDB-lite"/>
    </source>
</evidence>
<proteinExistence type="inferred from homology"/>